<sequence length="240" mass="26685">MTKITLSPQNFRIQKQETTLLKEKSTEKNSLAKSILAVKNHFIELRSKLSERFISHKNTESSATHFHRGSASEGRAVLTNKVVKDFMLQTLNDIDIRGSASKDPAYASQTREAILSAVYSKNKDQCCNLLISKGINIAPFLQEIGEAAKNAGLPGTTKNDVFTPSGAGANPFITPLISSANSKYPRMFINQHQQASFKIYAEKIIMTEVAPLFNECAMPTPQQFQLILENIANKYIQYTP</sequence>
<protein>
    <recommendedName>
        <fullName>Guanine nucleotide exchange factor SopE</fullName>
    </recommendedName>
    <alternativeName>
        <fullName>Effector protein SopE</fullName>
    </alternativeName>
    <alternativeName>
        <fullName>Toxin SopE</fullName>
    </alternativeName>
</protein>
<keyword id="KW-0343">GTPase activation</keyword>
<keyword id="KW-0344">Guanine-nucleotide releasing factor</keyword>
<keyword id="KW-0964">Secreted</keyword>
<keyword id="KW-0843">Virulence</keyword>
<gene>
    <name type="primary">sopE</name>
</gene>
<feature type="initiator methionine" description="Removed" evidence="1">
    <location>
        <position position="1"/>
    </location>
</feature>
<feature type="chain" id="PRO_0000220734" description="Guanine nucleotide exchange factor SopE">
    <location>
        <begin position="2"/>
        <end position="240"/>
    </location>
</feature>
<feature type="region of interest" description="GEF catalytic domain" evidence="1">
    <location>
        <begin position="78"/>
        <end position="240"/>
    </location>
</feature>
<reference key="1">
    <citation type="journal article" date="2001" name="J. Mol. Biol.">
        <title>Transfer of the Salmonella type III effector sopE between unrelated phage families.</title>
        <authorList>
            <person name="Mirold S."/>
            <person name="Rabsch W."/>
            <person name="Tschaepe H."/>
            <person name="Hardt W.-D."/>
        </authorList>
    </citation>
    <scope>NUCLEOTIDE SEQUENCE [GENOMIC DNA]</scope>
    <scope>PROPHAGE-RELATED REGION</scope>
    <source>
        <strain>SARC2 / s3333</strain>
    </source>
</reference>
<evidence type="ECO:0000250" key="1"/>
<evidence type="ECO:0000305" key="2"/>
<name>SOPE_SALET</name>
<organism>
    <name type="scientific">Salmonella enterica I</name>
    <dbReference type="NCBI Taxonomy" id="59201"/>
    <lineage>
        <taxon>Bacteria</taxon>
        <taxon>Pseudomonadati</taxon>
        <taxon>Pseudomonadota</taxon>
        <taxon>Gammaproteobacteria</taxon>
        <taxon>Enterobacterales</taxon>
        <taxon>Enterobacteriaceae</taxon>
        <taxon>Salmonella</taxon>
    </lineage>
</organism>
<comment type="function">
    <text evidence="1">Activator for both CDC42 and RAC1 by directly engaging these Rho GTPases and acting as potent guanine nucleotide exchange factor (GEF). This activation results in actin cytoskeleton rearrangements and stimulates membrane ruffling, promoting bacterial entry into non-phagocytic cells (By similarity).</text>
</comment>
<comment type="subcellular location">
    <subcellularLocation>
        <location evidence="1">Secreted</location>
    </subcellularLocation>
    <text evidence="1">Secreted via the type III secretion system 1 (SPI-1 T3SS).</text>
</comment>
<comment type="miscellaneous">
    <text>Encoded within a lambda-like prophage region with similarity to GIFSY phages.</text>
</comment>
<comment type="similarity">
    <text evidence="2">Belongs to the GEF (guanine exchange factor) SopE family.</text>
</comment>
<accession>Q7BD17</accession>
<dbReference type="EMBL" id="AF378115">
    <property type="protein sequence ID" value="AAL67195.1"/>
    <property type="molecule type" value="Genomic_DNA"/>
</dbReference>
<dbReference type="RefSeq" id="WP_000161708.1">
    <property type="nucleotide sequence ID" value="NZ_JBDORD010000068.1"/>
</dbReference>
<dbReference type="SMR" id="Q7BD17"/>
<dbReference type="GO" id="GO:0005576">
    <property type="term" value="C:extracellular region"/>
    <property type="evidence" value="ECO:0007669"/>
    <property type="project" value="UniProtKB-SubCell"/>
</dbReference>
<dbReference type="GO" id="GO:0005096">
    <property type="term" value="F:GTPase activator activity"/>
    <property type="evidence" value="ECO:0007669"/>
    <property type="project" value="UniProtKB-KW"/>
</dbReference>
<dbReference type="GO" id="GO:0005085">
    <property type="term" value="F:guanyl-nucleotide exchange factor activity"/>
    <property type="evidence" value="ECO:0007669"/>
    <property type="project" value="UniProtKB-KW"/>
</dbReference>
<dbReference type="GO" id="GO:0030036">
    <property type="term" value="P:actin cytoskeleton organization"/>
    <property type="evidence" value="ECO:0007669"/>
    <property type="project" value="InterPro"/>
</dbReference>
<dbReference type="Gene3D" id="1.10.4120.10">
    <property type="entry name" value="SopE-like, GEF domain"/>
    <property type="match status" value="1"/>
</dbReference>
<dbReference type="InterPro" id="IPR005414">
    <property type="entry name" value="SopE"/>
</dbReference>
<dbReference type="InterPro" id="IPR035949">
    <property type="entry name" value="SopE-like_GEF_dom_sf"/>
</dbReference>
<dbReference type="InterPro" id="IPR016019">
    <property type="entry name" value="SopE_GEF_dom"/>
</dbReference>
<dbReference type="InterPro" id="IPR016018">
    <property type="entry name" value="SopE_N_dom"/>
</dbReference>
<dbReference type="NCBIfam" id="NF011809">
    <property type="entry name" value="PRK15279.1"/>
    <property type="match status" value="1"/>
</dbReference>
<dbReference type="NCBIfam" id="NF011810">
    <property type="entry name" value="PRK15280.1"/>
    <property type="match status" value="1"/>
</dbReference>
<dbReference type="Pfam" id="PF05364">
    <property type="entry name" value="SecIII_SopE_N"/>
    <property type="match status" value="1"/>
</dbReference>
<dbReference type="Pfam" id="PF07487">
    <property type="entry name" value="SopE_GEF"/>
    <property type="match status" value="1"/>
</dbReference>
<dbReference type="PIRSF" id="PIRSF034781">
    <property type="entry name" value="SecIII_sopE"/>
    <property type="match status" value="1"/>
</dbReference>
<dbReference type="PRINTS" id="PR01593">
    <property type="entry name" value="SOPEPROTEIN"/>
</dbReference>
<dbReference type="SUPFAM" id="SSF81832">
    <property type="entry name" value="SopE-like GEF domain"/>
    <property type="match status" value="1"/>
</dbReference>
<proteinExistence type="inferred from homology"/>